<sequence>MINSPRVCIQVQSVYIEAQSSPDDERYVFAYTVTIRNLGRAPVQLLGRYWLITNGHGRETEVQGEGVVGVQPRIAPGEEYQYTSGAVIETPLGTMQGHYEMIDENGDAFTIDIPVFRLAVPTLIH</sequence>
<feature type="chain" id="PRO_1000083642" description="Protein ApaG">
    <location>
        <begin position="1"/>
        <end position="125"/>
    </location>
</feature>
<feature type="domain" description="ApaG" evidence="1">
    <location>
        <begin position="1"/>
        <end position="125"/>
    </location>
</feature>
<evidence type="ECO:0000255" key="1">
    <source>
        <dbReference type="HAMAP-Rule" id="MF_00791"/>
    </source>
</evidence>
<accession>Q5PDE0</accession>
<dbReference type="EMBL" id="CP000026">
    <property type="protein sequence ID" value="AAV76123.1"/>
    <property type="molecule type" value="Genomic_DNA"/>
</dbReference>
<dbReference type="RefSeq" id="WP_000610894.1">
    <property type="nucleotide sequence ID" value="NC_006511.1"/>
</dbReference>
<dbReference type="SMR" id="Q5PDE0"/>
<dbReference type="GeneID" id="66754612"/>
<dbReference type="KEGG" id="spt:SPA0090"/>
<dbReference type="HOGENOM" id="CLU_128074_0_0_6"/>
<dbReference type="Proteomes" id="UP000008185">
    <property type="component" value="Chromosome"/>
</dbReference>
<dbReference type="GO" id="GO:0070987">
    <property type="term" value="P:error-free translesion synthesis"/>
    <property type="evidence" value="ECO:0007669"/>
    <property type="project" value="TreeGrafter"/>
</dbReference>
<dbReference type="Gene3D" id="2.60.40.1470">
    <property type="entry name" value="ApaG domain"/>
    <property type="match status" value="1"/>
</dbReference>
<dbReference type="HAMAP" id="MF_00791">
    <property type="entry name" value="ApaG"/>
    <property type="match status" value="1"/>
</dbReference>
<dbReference type="InterPro" id="IPR007474">
    <property type="entry name" value="ApaG_domain"/>
</dbReference>
<dbReference type="InterPro" id="IPR036767">
    <property type="entry name" value="ApaG_sf"/>
</dbReference>
<dbReference type="InterPro" id="IPR023065">
    <property type="entry name" value="Uncharacterised_ApaG"/>
</dbReference>
<dbReference type="NCBIfam" id="NF003967">
    <property type="entry name" value="PRK05461.1"/>
    <property type="match status" value="1"/>
</dbReference>
<dbReference type="PANTHER" id="PTHR14289">
    <property type="entry name" value="F-BOX ONLY PROTEIN 3"/>
    <property type="match status" value="1"/>
</dbReference>
<dbReference type="PANTHER" id="PTHR14289:SF16">
    <property type="entry name" value="POLYMERASE DELTA-INTERACTING PROTEIN 2"/>
    <property type="match status" value="1"/>
</dbReference>
<dbReference type="Pfam" id="PF04379">
    <property type="entry name" value="DUF525"/>
    <property type="match status" value="1"/>
</dbReference>
<dbReference type="SUPFAM" id="SSF110069">
    <property type="entry name" value="ApaG-like"/>
    <property type="match status" value="1"/>
</dbReference>
<dbReference type="PROSITE" id="PS51087">
    <property type="entry name" value="APAG"/>
    <property type="match status" value="1"/>
</dbReference>
<gene>
    <name evidence="1" type="primary">apaG</name>
    <name type="ordered locus">SPA0090</name>
</gene>
<organism>
    <name type="scientific">Salmonella paratyphi A (strain ATCC 9150 / SARB42)</name>
    <dbReference type="NCBI Taxonomy" id="295319"/>
    <lineage>
        <taxon>Bacteria</taxon>
        <taxon>Pseudomonadati</taxon>
        <taxon>Pseudomonadota</taxon>
        <taxon>Gammaproteobacteria</taxon>
        <taxon>Enterobacterales</taxon>
        <taxon>Enterobacteriaceae</taxon>
        <taxon>Salmonella</taxon>
    </lineage>
</organism>
<proteinExistence type="inferred from homology"/>
<reference key="1">
    <citation type="journal article" date="2004" name="Nat. Genet.">
        <title>Comparison of genome degradation in Paratyphi A and Typhi, human-restricted serovars of Salmonella enterica that cause typhoid.</title>
        <authorList>
            <person name="McClelland M."/>
            <person name="Sanderson K.E."/>
            <person name="Clifton S.W."/>
            <person name="Latreille P."/>
            <person name="Porwollik S."/>
            <person name="Sabo A."/>
            <person name="Meyer R."/>
            <person name="Bieri T."/>
            <person name="Ozersky P."/>
            <person name="McLellan M."/>
            <person name="Harkins C.R."/>
            <person name="Wang C."/>
            <person name="Nguyen C."/>
            <person name="Berghoff A."/>
            <person name="Elliott G."/>
            <person name="Kohlberg S."/>
            <person name="Strong C."/>
            <person name="Du F."/>
            <person name="Carter J."/>
            <person name="Kremizki C."/>
            <person name="Layman D."/>
            <person name="Leonard S."/>
            <person name="Sun H."/>
            <person name="Fulton L."/>
            <person name="Nash W."/>
            <person name="Miner T."/>
            <person name="Minx P."/>
            <person name="Delehaunty K."/>
            <person name="Fronick C."/>
            <person name="Magrini V."/>
            <person name="Nhan M."/>
            <person name="Warren W."/>
            <person name="Florea L."/>
            <person name="Spieth J."/>
            <person name="Wilson R.K."/>
        </authorList>
    </citation>
    <scope>NUCLEOTIDE SEQUENCE [LARGE SCALE GENOMIC DNA]</scope>
    <source>
        <strain>ATCC 9150 / SARB42</strain>
    </source>
</reference>
<protein>
    <recommendedName>
        <fullName evidence="1">Protein ApaG</fullName>
    </recommendedName>
</protein>
<name>APAG_SALPA</name>